<accession>Q8NES3</accession>
<accession>B3KTY6</accession>
<accession>B5MCR5</accession>
<accession>O00589</accession>
<accession>Q96C39</accession>
<accession>Q9UJW5</accession>
<organism>
    <name type="scientific">Homo sapiens</name>
    <name type="common">Human</name>
    <dbReference type="NCBI Taxonomy" id="9606"/>
    <lineage>
        <taxon>Eukaryota</taxon>
        <taxon>Metazoa</taxon>
        <taxon>Chordata</taxon>
        <taxon>Craniata</taxon>
        <taxon>Vertebrata</taxon>
        <taxon>Euteleostomi</taxon>
        <taxon>Mammalia</taxon>
        <taxon>Eutheria</taxon>
        <taxon>Euarchontoglires</taxon>
        <taxon>Primates</taxon>
        <taxon>Haplorrhini</taxon>
        <taxon>Catarrhini</taxon>
        <taxon>Hominidae</taxon>
        <taxon>Homo</taxon>
    </lineage>
</organism>
<evidence type="ECO:0000250" key="1"/>
<evidence type="ECO:0000250" key="2">
    <source>
        <dbReference type="UniProtKB" id="O09010"/>
    </source>
</evidence>
<evidence type="ECO:0000255" key="3"/>
<evidence type="ECO:0000256" key="4">
    <source>
        <dbReference type="SAM" id="MobiDB-lite"/>
    </source>
</evidence>
<evidence type="ECO:0000269" key="5">
    <source>
    </source>
</evidence>
<evidence type="ECO:0000269" key="6">
    <source>
    </source>
</evidence>
<evidence type="ECO:0000269" key="7">
    <source>
    </source>
</evidence>
<evidence type="ECO:0000269" key="8">
    <source>
    </source>
</evidence>
<evidence type="ECO:0000303" key="9">
    <source>
    </source>
</evidence>
<evidence type="ECO:0000303" key="10">
    <source>
    </source>
</evidence>
<evidence type="ECO:0000303" key="11">
    <source>
    </source>
</evidence>
<evidence type="ECO:0000303" key="12">
    <source ref="5"/>
</evidence>
<evidence type="ECO:0000305" key="13"/>
<evidence type="ECO:0000305" key="14">
    <source>
    </source>
</evidence>
<evidence type="ECO:0000312" key="15">
    <source>
        <dbReference type="HGNC" id="HGNC:6560"/>
    </source>
</evidence>
<gene>
    <name evidence="15" type="primary">LFNG</name>
</gene>
<protein>
    <recommendedName>
        <fullName evidence="13">Beta-1,3-N-acetylglucosaminyltransferase lunatic fringe</fullName>
        <ecNumber evidence="14">2.4.1.222</ecNumber>
    </recommendedName>
    <alternativeName>
        <fullName>O-fucosylpeptide 3-beta-N-acetylglucosaminyltransferase</fullName>
    </alternativeName>
</protein>
<comment type="function">
    <text evidence="2 5">Glycosyltransferase that initiates the elongation of O-linked fucose residues attached to EGF-like repeats in the extracellular domain of Notch molecules. Modulates NOTCH1 activity by modifying O-fucose residues at specific EGF-like domains resulting in inhibition of NOTCH1 activation by JAG1 and enhancement of NOTCH1 activation by DLL1 via an increase in its binding to DLL1 (By similarity). Decreases the binding of JAG1 to NOTCH2 but not that of DLL1 (PubMed:11346656). Essential mediator of somite segmentation and patterning (By similarity).</text>
</comment>
<comment type="catalytic activity">
    <reaction evidence="14">
        <text>3-O-(alpha-L-fucosyl)-L-threonyl-[EGF-like domain protein] + UDP-N-acetyl-alpha-D-glucosamine = 3-O-(N-acetyl-beta-D-glucosaminyl-(1-&gt;3)-alpha-L-fucosyl)-L-threonyl-[EGF-like domain protein] + UDP + H(+)</text>
        <dbReference type="Rhea" id="RHEA:70531"/>
        <dbReference type="Rhea" id="RHEA-COMP:17922"/>
        <dbReference type="Rhea" id="RHEA-COMP:17923"/>
        <dbReference type="ChEBI" id="CHEBI:15378"/>
        <dbReference type="ChEBI" id="CHEBI:57705"/>
        <dbReference type="ChEBI" id="CHEBI:58223"/>
        <dbReference type="ChEBI" id="CHEBI:189631"/>
        <dbReference type="ChEBI" id="CHEBI:189634"/>
        <dbReference type="EC" id="2.4.1.222"/>
    </reaction>
</comment>
<comment type="catalytic activity">
    <reaction evidence="14">
        <text>3-O-(alpha-L-fucosyl)-L-seryl-[EGF-like domain protein] + UDP-N-acetyl-alpha-D-glucosamine = 3-O-(N-acetyl-beta-D-glucosaminyl-(1-&gt;3)-alpha-L-fucosyl)-L-seryl-[EGF-like domain protein] + UDP + H(+)</text>
        <dbReference type="Rhea" id="RHEA:70511"/>
        <dbReference type="Rhea" id="RHEA-COMP:17919"/>
        <dbReference type="Rhea" id="RHEA-COMP:17920"/>
        <dbReference type="ChEBI" id="CHEBI:15378"/>
        <dbReference type="ChEBI" id="CHEBI:57705"/>
        <dbReference type="ChEBI" id="CHEBI:58223"/>
        <dbReference type="ChEBI" id="CHEBI:189632"/>
        <dbReference type="ChEBI" id="CHEBI:189633"/>
        <dbReference type="EC" id="2.4.1.222"/>
    </reaction>
</comment>
<comment type="cofactor">
    <cofactor evidence="2">
        <name>Mn(2+)</name>
        <dbReference type="ChEBI" id="CHEBI:29035"/>
    </cofactor>
    <cofactor evidence="2">
        <name>Co(2+)</name>
        <dbReference type="ChEBI" id="CHEBI:48828"/>
    </cofactor>
    <text evidence="2">Manganese is the most effective. Can also use cobalt with lower efficiency. Has some activity with magnesium and calcium, but not zinc.</text>
</comment>
<comment type="subcellular location">
    <subcellularLocation>
        <location evidence="2">Golgi apparatus</location>
    </subcellularLocation>
    <subcellularLocation>
        <location evidence="13">Golgi apparatus membrane</location>
        <topology evidence="13">Single-pass type II membrane protein</topology>
    </subcellularLocation>
</comment>
<comment type="alternative products">
    <event type="alternative splicing"/>
    <isoform>
        <id>Q8NES3-1</id>
        <name>1</name>
        <sequence type="displayed"/>
    </isoform>
    <isoform>
        <id>Q8NES3-2</id>
        <name>2</name>
        <sequence type="described" ref="VSP_001792 VSP_001793"/>
    </isoform>
    <isoform>
        <id>Q8NES3-3</id>
        <name>3</name>
        <sequence type="described" ref="VSP_001794 VSP_001795"/>
    </isoform>
    <isoform>
        <id>Q8NES3-4</id>
        <name>4</name>
        <sequence type="described" ref="VSP_044850 VSP_044851"/>
    </isoform>
    <text>Experimental confirmation may be lacking for some isoforms.</text>
</comment>
<comment type="PTM">
    <text evidence="13">A soluble form may be derived from the membrane form by proteolytic processing.</text>
</comment>
<comment type="disease" evidence="6 8">
    <disease id="DI-01083">
        <name>Spondylocostal dysostosis 3, autosomal recessive</name>
        <acronym>SCDO3</acronym>
        <description>A condition of variable severity associated with vertebral and rib segmentation defects. The main skeletal malformations include fusion of vertebrae, hemivertebrae, fusion of certain ribs, and other rib malformations. Deformity of the chest and spine (severe scoliosis, kyphoscoliosis and lordosis) is a natural consequence of the malformation and leads to a dwarf-like appearance. As the thorax is small, infants frequently have respiratory insufficiency and repeated respiratory infections resulting in life-threatening complications in the first year of life.</description>
        <dbReference type="MIM" id="609813"/>
    </disease>
    <text>The disease is caused by variants affecting the gene represented in this entry.</text>
</comment>
<comment type="similarity">
    <text evidence="13">Belongs to the glycosyltransferase 31 family.</text>
</comment>
<comment type="online information" name="Functional Glycomics Gateway - GTase">
    <link uri="http://www.functionalglycomics.org/glycomics/molecule/jsp/glycoEnzyme/viewGlycoEnzyme.jsp?gbpId=gt_hum_551"/>
    <text>Beta-1,3-N-acetylglucosaminyltransferase lunatic fringe</text>
</comment>
<reference key="1">
    <citation type="journal article" date="2004" name="Nat. Genet.">
        <title>Complete sequencing and characterization of 21,243 full-length human cDNAs.</title>
        <authorList>
            <person name="Ota T."/>
            <person name="Suzuki Y."/>
            <person name="Nishikawa T."/>
            <person name="Otsuki T."/>
            <person name="Sugiyama T."/>
            <person name="Irie R."/>
            <person name="Wakamatsu A."/>
            <person name="Hayashi K."/>
            <person name="Sato H."/>
            <person name="Nagai K."/>
            <person name="Kimura K."/>
            <person name="Makita H."/>
            <person name="Sekine M."/>
            <person name="Obayashi M."/>
            <person name="Nishi T."/>
            <person name="Shibahara T."/>
            <person name="Tanaka T."/>
            <person name="Ishii S."/>
            <person name="Yamamoto J."/>
            <person name="Saito K."/>
            <person name="Kawai Y."/>
            <person name="Isono Y."/>
            <person name="Nakamura Y."/>
            <person name="Nagahari K."/>
            <person name="Murakami K."/>
            <person name="Yasuda T."/>
            <person name="Iwayanagi T."/>
            <person name="Wagatsuma M."/>
            <person name="Shiratori A."/>
            <person name="Sudo H."/>
            <person name="Hosoiri T."/>
            <person name="Kaku Y."/>
            <person name="Kodaira H."/>
            <person name="Kondo H."/>
            <person name="Sugawara M."/>
            <person name="Takahashi M."/>
            <person name="Kanda K."/>
            <person name="Yokoi T."/>
            <person name="Furuya T."/>
            <person name="Kikkawa E."/>
            <person name="Omura Y."/>
            <person name="Abe K."/>
            <person name="Kamihara K."/>
            <person name="Katsuta N."/>
            <person name="Sato K."/>
            <person name="Tanikawa M."/>
            <person name="Yamazaki M."/>
            <person name="Ninomiya K."/>
            <person name="Ishibashi T."/>
            <person name="Yamashita H."/>
            <person name="Murakawa K."/>
            <person name="Fujimori K."/>
            <person name="Tanai H."/>
            <person name="Kimata M."/>
            <person name="Watanabe M."/>
            <person name="Hiraoka S."/>
            <person name="Chiba Y."/>
            <person name="Ishida S."/>
            <person name="Ono Y."/>
            <person name="Takiguchi S."/>
            <person name="Watanabe S."/>
            <person name="Yosida M."/>
            <person name="Hotuta T."/>
            <person name="Kusano J."/>
            <person name="Kanehori K."/>
            <person name="Takahashi-Fujii A."/>
            <person name="Hara H."/>
            <person name="Tanase T.-O."/>
            <person name="Nomura Y."/>
            <person name="Togiya S."/>
            <person name="Komai F."/>
            <person name="Hara R."/>
            <person name="Takeuchi K."/>
            <person name="Arita M."/>
            <person name="Imose N."/>
            <person name="Musashino K."/>
            <person name="Yuuki H."/>
            <person name="Oshima A."/>
            <person name="Sasaki N."/>
            <person name="Aotsuka S."/>
            <person name="Yoshikawa Y."/>
            <person name="Matsunawa H."/>
            <person name="Ichihara T."/>
            <person name="Shiohata N."/>
            <person name="Sano S."/>
            <person name="Moriya S."/>
            <person name="Momiyama H."/>
            <person name="Satoh N."/>
            <person name="Takami S."/>
            <person name="Terashima Y."/>
            <person name="Suzuki O."/>
            <person name="Nakagawa S."/>
            <person name="Senoh A."/>
            <person name="Mizoguchi H."/>
            <person name="Goto Y."/>
            <person name="Shimizu F."/>
            <person name="Wakebe H."/>
            <person name="Hishigaki H."/>
            <person name="Watanabe T."/>
            <person name="Sugiyama A."/>
            <person name="Takemoto M."/>
            <person name="Kawakami B."/>
            <person name="Yamazaki M."/>
            <person name="Watanabe K."/>
            <person name="Kumagai A."/>
            <person name="Itakura S."/>
            <person name="Fukuzumi Y."/>
            <person name="Fujimori Y."/>
            <person name="Komiyama M."/>
            <person name="Tashiro H."/>
            <person name="Tanigami A."/>
            <person name="Fujiwara T."/>
            <person name="Ono T."/>
            <person name="Yamada K."/>
            <person name="Fujii Y."/>
            <person name="Ozaki K."/>
            <person name="Hirao M."/>
            <person name="Ohmori Y."/>
            <person name="Kawabata A."/>
            <person name="Hikiji T."/>
            <person name="Kobatake N."/>
            <person name="Inagaki H."/>
            <person name="Ikema Y."/>
            <person name="Okamoto S."/>
            <person name="Okitani R."/>
            <person name="Kawakami T."/>
            <person name="Noguchi S."/>
            <person name="Itoh T."/>
            <person name="Shigeta K."/>
            <person name="Senba T."/>
            <person name="Matsumura K."/>
            <person name="Nakajima Y."/>
            <person name="Mizuno T."/>
            <person name="Morinaga M."/>
            <person name="Sasaki M."/>
            <person name="Togashi T."/>
            <person name="Oyama M."/>
            <person name="Hata H."/>
            <person name="Watanabe M."/>
            <person name="Komatsu T."/>
            <person name="Mizushima-Sugano J."/>
            <person name="Satoh T."/>
            <person name="Shirai Y."/>
            <person name="Takahashi Y."/>
            <person name="Nakagawa K."/>
            <person name="Okumura K."/>
            <person name="Nagase T."/>
            <person name="Nomura N."/>
            <person name="Kikuchi H."/>
            <person name="Masuho Y."/>
            <person name="Yamashita R."/>
            <person name="Nakai K."/>
            <person name="Yada T."/>
            <person name="Nakamura Y."/>
            <person name="Ohara O."/>
            <person name="Isogai T."/>
            <person name="Sugano S."/>
        </authorList>
    </citation>
    <scope>NUCLEOTIDE SEQUENCE [LARGE SCALE MRNA] (ISOFORM 4)</scope>
</reference>
<reference key="2">
    <citation type="journal article" date="2003" name="Nature">
        <title>The DNA sequence of human chromosome 7.</title>
        <authorList>
            <person name="Hillier L.W."/>
            <person name="Fulton R.S."/>
            <person name="Fulton L.A."/>
            <person name="Graves T.A."/>
            <person name="Pepin K.H."/>
            <person name="Wagner-McPherson C."/>
            <person name="Layman D."/>
            <person name="Maas J."/>
            <person name="Jaeger S."/>
            <person name="Walker R."/>
            <person name="Wylie K."/>
            <person name="Sekhon M."/>
            <person name="Becker M.C."/>
            <person name="O'Laughlin M.D."/>
            <person name="Schaller M.E."/>
            <person name="Fewell G.A."/>
            <person name="Delehaunty K.D."/>
            <person name="Miner T.L."/>
            <person name="Nash W.E."/>
            <person name="Cordes M."/>
            <person name="Du H."/>
            <person name="Sun H."/>
            <person name="Edwards J."/>
            <person name="Bradshaw-Cordum H."/>
            <person name="Ali J."/>
            <person name="Andrews S."/>
            <person name="Isak A."/>
            <person name="Vanbrunt A."/>
            <person name="Nguyen C."/>
            <person name="Du F."/>
            <person name="Lamar B."/>
            <person name="Courtney L."/>
            <person name="Kalicki J."/>
            <person name="Ozersky P."/>
            <person name="Bielicki L."/>
            <person name="Scott K."/>
            <person name="Holmes A."/>
            <person name="Harkins R."/>
            <person name="Harris A."/>
            <person name="Strong C.M."/>
            <person name="Hou S."/>
            <person name="Tomlinson C."/>
            <person name="Dauphin-Kohlberg S."/>
            <person name="Kozlowicz-Reilly A."/>
            <person name="Leonard S."/>
            <person name="Rohlfing T."/>
            <person name="Rock S.M."/>
            <person name="Tin-Wollam A.-M."/>
            <person name="Abbott A."/>
            <person name="Minx P."/>
            <person name="Maupin R."/>
            <person name="Strowmatt C."/>
            <person name="Latreille P."/>
            <person name="Miller N."/>
            <person name="Johnson D."/>
            <person name="Murray J."/>
            <person name="Woessner J.P."/>
            <person name="Wendl M.C."/>
            <person name="Yang S.-P."/>
            <person name="Schultz B.R."/>
            <person name="Wallis J.W."/>
            <person name="Spieth J."/>
            <person name="Bieri T.A."/>
            <person name="Nelson J.O."/>
            <person name="Berkowicz N."/>
            <person name="Wohldmann P.E."/>
            <person name="Cook L.L."/>
            <person name="Hickenbotham M.T."/>
            <person name="Eldred J."/>
            <person name="Williams D."/>
            <person name="Bedell J.A."/>
            <person name="Mardis E.R."/>
            <person name="Clifton S.W."/>
            <person name="Chissoe S.L."/>
            <person name="Marra M.A."/>
            <person name="Raymond C."/>
            <person name="Haugen E."/>
            <person name="Gillett W."/>
            <person name="Zhou Y."/>
            <person name="James R."/>
            <person name="Phelps K."/>
            <person name="Iadanoto S."/>
            <person name="Bubb K."/>
            <person name="Simms E."/>
            <person name="Levy R."/>
            <person name="Clendenning J."/>
            <person name="Kaul R."/>
            <person name="Kent W.J."/>
            <person name="Furey T.S."/>
            <person name="Baertsch R.A."/>
            <person name="Brent M.R."/>
            <person name="Keibler E."/>
            <person name="Flicek P."/>
            <person name="Bork P."/>
            <person name="Suyama M."/>
            <person name="Bailey J.A."/>
            <person name="Portnoy M.E."/>
            <person name="Torrents D."/>
            <person name="Chinwalla A.T."/>
            <person name="Gish W.R."/>
            <person name="Eddy S.R."/>
            <person name="McPherson J.D."/>
            <person name="Olson M.V."/>
            <person name="Eichler E.E."/>
            <person name="Green E.D."/>
            <person name="Waterston R.H."/>
            <person name="Wilson R.K."/>
        </authorList>
    </citation>
    <scope>NUCLEOTIDE SEQUENCE [LARGE SCALE GENOMIC DNA]</scope>
</reference>
<reference key="3">
    <citation type="journal article" date="1997" name="Development">
        <title>A family of mammalian Fringe genes implicated in boundary determination and the Notch pathway.</title>
        <authorList>
            <person name="Johnston S.H."/>
            <person name="Rauskolb C."/>
            <person name="Wilson R."/>
            <person name="Prabhakaran B."/>
            <person name="Irvine K.D."/>
            <person name="Vogt T.F."/>
        </authorList>
    </citation>
    <scope>NUCLEOTIDE SEQUENCE [MRNA] OF 105-361 (ISOFORM 3)</scope>
</reference>
<reference key="4">
    <citation type="journal article" date="2002" name="Dev. Cell">
        <title>Clock regulatory elements control cyclic expression of Lunatic fringe during somitogenesis.</title>
        <authorList>
            <person name="Cole S.E."/>
            <person name="Levorse J.M."/>
            <person name="Tilghman S.M."/>
            <person name="Vogt T.F."/>
        </authorList>
    </citation>
    <scope>NUCLEOTIDE SEQUENCE [GENOMIC DNA] OF 1-144 (ISOFORM 1)</scope>
</reference>
<reference key="5">
    <citation type="submission" date="1999-11" db="EMBL/GenBank/DDBJ databases">
        <title>Homo sapiens fringe gene homolog.</title>
        <authorList>
            <person name="Holloway J."/>
            <person name="Blumberg H."/>
            <person name="Jelinek L."/>
            <person name="Whitmore T."/>
            <person name="Jaspers S."/>
            <person name="Gross J."/>
            <person name="Haldeman B."/>
            <person name="Taft D."/>
            <person name="O'Hara P."/>
        </authorList>
    </citation>
    <scope>NUCLEOTIDE SEQUENCE [MRNA] OF 104-361 (ISOFORM 3)</scope>
</reference>
<reference key="6">
    <citation type="journal article" date="2004" name="Genome Res.">
        <title>The status, quality, and expansion of the NIH full-length cDNA project: the Mammalian Gene Collection (MGC).</title>
        <authorList>
            <consortium name="The MGC Project Team"/>
        </authorList>
    </citation>
    <scope>NUCLEOTIDE SEQUENCE [LARGE SCALE MRNA] (ISOFORM 2)</scope>
    <source>
        <tissue>Kidney</tissue>
    </source>
</reference>
<reference key="7">
    <citation type="journal article" date="2001" name="J. Biol. Chem.">
        <title>Manic fringe and lunatic fringe modify different sites of the Notch2 extracellular region, resulting in different signaling modulation.</title>
        <authorList>
            <person name="Shimizu K."/>
            <person name="Chiba S."/>
            <person name="Saito T."/>
            <person name="Kumano K."/>
            <person name="Takahashi T."/>
            <person name="Hirai H."/>
        </authorList>
    </citation>
    <scope>FUNCTION</scope>
</reference>
<reference key="8">
    <citation type="journal article" date="2006" name="Am. J. Hum. Genet.">
        <title>Mutation of the LUNATIC FRINGE gene in humans causes spondylocostal dysostosis with a severe vertebral phenotype.</title>
        <authorList>
            <person name="Sparrow D.B."/>
            <person name="Chapman G."/>
            <person name="Wouters M.A."/>
            <person name="Whittock N.V."/>
            <person name="Ellard S."/>
            <person name="Fatkin D."/>
            <person name="Turnpenny P.D."/>
            <person name="Kusumi K."/>
            <person name="Sillence D."/>
            <person name="Dunwoodie S.L."/>
        </authorList>
    </citation>
    <scope>VARIANT SCDO3 LEU-188</scope>
    <scope>CHARACTERIZATION OF VARIANT SCDO3 LEU-188</scope>
</reference>
<reference key="9">
    <citation type="journal article" date="2008" name="Am. J. Hum. Genet.">
        <title>Mutations in the MESP2 gene cause spondylothoracic dysostosis/Jarcho-Levin syndrome.</title>
        <authorList>
            <person name="Cornier A.S."/>
            <person name="Staehling-Hampton K."/>
            <person name="Delventhal K.M."/>
            <person name="Saga Y."/>
            <person name="Caubet J.-F."/>
            <person name="Sasaki N."/>
            <person name="Ellard S."/>
            <person name="Young E."/>
            <person name="Ramirez N."/>
            <person name="Carlo S.E."/>
            <person name="Torres J."/>
            <person name="Emans J.B."/>
            <person name="Turnpenny P.D."/>
            <person name="Pourquie O."/>
        </authorList>
    </citation>
    <scope>VARIANTS ARG-38 AND MET-346</scope>
</reference>
<reference key="10">
    <citation type="journal article" date="2019" name="J. Hum. Genet.">
        <title>Identification of novel LFNG mutations in spondylocostal dysostosis.</title>
        <authorList>
            <person name="Otomo N."/>
            <person name="Mizumoto S."/>
            <person name="Lu H.F."/>
            <person name="Takeda K."/>
            <person name="Campos-Xavier B."/>
            <person name="Mittaz-Crettol L."/>
            <person name="Guo L."/>
            <person name="Takikawa K."/>
            <person name="Nakamura M."/>
            <person name="Yamada S."/>
            <person name="Matsumoto M."/>
            <person name="Watanabe K."/>
            <person name="Ikegawa S."/>
        </authorList>
    </citation>
    <scope>VARIANT SCDO3 ASN-201</scope>
    <scope>CHARACTERIZATION OF VARIANT SCDO3 ASN-201</scope>
    <scope>CATALYTIC ACTIVITY</scope>
</reference>
<name>LFNG_HUMAN</name>
<keyword id="KW-0025">Alternative splicing</keyword>
<keyword id="KW-0217">Developmental protein</keyword>
<keyword id="KW-0225">Disease variant</keyword>
<keyword id="KW-1015">Disulfide bond</keyword>
<keyword id="KW-0242">Dwarfism</keyword>
<keyword id="KW-0325">Glycoprotein</keyword>
<keyword id="KW-0328">Glycosyltransferase</keyword>
<keyword id="KW-0333">Golgi apparatus</keyword>
<keyword id="KW-0464">Manganese</keyword>
<keyword id="KW-0472">Membrane</keyword>
<keyword id="KW-0479">Metal-binding</keyword>
<keyword id="KW-1267">Proteomics identification</keyword>
<keyword id="KW-1185">Reference proteome</keyword>
<keyword id="KW-0735">Signal-anchor</keyword>
<keyword id="KW-0808">Transferase</keyword>
<keyword id="KW-0812">Transmembrane</keyword>
<keyword id="KW-1133">Transmembrane helix</keyword>
<dbReference type="EC" id="2.4.1.222" evidence="14"/>
<dbReference type="EMBL" id="AK096284">
    <property type="protein sequence ID" value="BAG53248.1"/>
    <property type="molecule type" value="mRNA"/>
</dbReference>
<dbReference type="EMBL" id="AC092488">
    <property type="status" value="NOT_ANNOTATED_CDS"/>
    <property type="molecule type" value="Genomic_DNA"/>
</dbReference>
<dbReference type="EMBL" id="U94354">
    <property type="protein sequence ID" value="AAC51360.1"/>
    <property type="molecule type" value="mRNA"/>
</dbReference>
<dbReference type="EMBL" id="AY124582">
    <property type="protein sequence ID" value="AAM93542.1"/>
    <property type="molecule type" value="Genomic_DNA"/>
</dbReference>
<dbReference type="EMBL" id="AF193612">
    <property type="protein sequence ID" value="AAF07187.1"/>
    <property type="molecule type" value="mRNA"/>
</dbReference>
<dbReference type="EMBL" id="BC014851">
    <property type="protein sequence ID" value="AAH14851.1"/>
    <property type="molecule type" value="mRNA"/>
</dbReference>
<dbReference type="CCDS" id="CCDS34586.1">
    <molecule id="Q8NES3-3"/>
</dbReference>
<dbReference type="CCDS" id="CCDS34587.1">
    <molecule id="Q8NES3-1"/>
</dbReference>
<dbReference type="CCDS" id="CCDS55081.1">
    <molecule id="Q8NES3-4"/>
</dbReference>
<dbReference type="CCDS" id="CCDS55082.1">
    <molecule id="Q8NES3-2"/>
</dbReference>
<dbReference type="RefSeq" id="NP_001035257.1">
    <molecule id="Q8NES3-1"/>
    <property type="nucleotide sequence ID" value="NM_001040167.2"/>
</dbReference>
<dbReference type="RefSeq" id="NP_001035258.1">
    <molecule id="Q8NES3-3"/>
    <property type="nucleotide sequence ID" value="NM_001040168.2"/>
</dbReference>
<dbReference type="RefSeq" id="NP_001159827.1">
    <molecule id="Q8NES3-4"/>
    <property type="nucleotide sequence ID" value="NM_001166355.2"/>
</dbReference>
<dbReference type="RefSeq" id="NP_002295.1">
    <molecule id="Q8NES3-2"/>
    <property type="nucleotide sequence ID" value="NM_002304.3"/>
</dbReference>
<dbReference type="SMR" id="Q8NES3"/>
<dbReference type="BioGRID" id="110146">
    <property type="interactions" value="12"/>
</dbReference>
<dbReference type="FunCoup" id="Q8NES3">
    <property type="interactions" value="172"/>
</dbReference>
<dbReference type="IntAct" id="Q8NES3">
    <property type="interactions" value="9"/>
</dbReference>
<dbReference type="STRING" id="9606.ENSP00000222725"/>
<dbReference type="CAZy" id="GT31">
    <property type="family name" value="Glycosyltransferase Family 31"/>
</dbReference>
<dbReference type="GlyConnect" id="1031">
    <property type="glycosylation" value="1 N-Linked glycan (1 site)"/>
</dbReference>
<dbReference type="GlyCosmos" id="Q8NES3">
    <property type="glycosylation" value="1 site, 1 glycan"/>
</dbReference>
<dbReference type="GlyGen" id="Q8NES3">
    <property type="glycosylation" value="1 site, 2 N-linked glycans (1 site)"/>
</dbReference>
<dbReference type="iPTMnet" id="Q8NES3"/>
<dbReference type="PhosphoSitePlus" id="Q8NES3"/>
<dbReference type="BioMuta" id="LFNG"/>
<dbReference type="DMDM" id="27734417"/>
<dbReference type="jPOST" id="Q8NES3"/>
<dbReference type="MassIVE" id="Q8NES3"/>
<dbReference type="PaxDb" id="9606-ENSP00000222725"/>
<dbReference type="PeptideAtlas" id="Q8NES3"/>
<dbReference type="ProteomicsDB" id="6090"/>
<dbReference type="ProteomicsDB" id="73208">
    <molecule id="Q8NES3-1"/>
</dbReference>
<dbReference type="ProteomicsDB" id="73209">
    <molecule id="Q8NES3-2"/>
</dbReference>
<dbReference type="ProteomicsDB" id="73210">
    <molecule id="Q8NES3-3"/>
</dbReference>
<dbReference type="Antibodypedia" id="24378">
    <property type="antibodies" value="332 antibodies from 32 providers"/>
</dbReference>
<dbReference type="DNASU" id="3955"/>
<dbReference type="Ensembl" id="ENST00000222725.10">
    <molecule id="Q8NES3-1"/>
    <property type="protein sequence ID" value="ENSP00000222725.5"/>
    <property type="gene ID" value="ENSG00000106003.14"/>
</dbReference>
<dbReference type="Ensembl" id="ENST00000338732.7">
    <molecule id="Q8NES3-2"/>
    <property type="protein sequence ID" value="ENSP00000343095.3"/>
    <property type="gene ID" value="ENSG00000106003.14"/>
</dbReference>
<dbReference type="Ensembl" id="ENST00000359574.7">
    <molecule id="Q8NES3-3"/>
    <property type="protein sequence ID" value="ENSP00000352579.3"/>
    <property type="gene ID" value="ENSG00000106003.14"/>
</dbReference>
<dbReference type="Ensembl" id="ENST00000402045.5">
    <molecule id="Q8NES3-2"/>
    <property type="protein sequence ID" value="ENSP00000384786.1"/>
    <property type="gene ID" value="ENSG00000106003.14"/>
</dbReference>
<dbReference type="Ensembl" id="ENST00000402506.5">
    <molecule id="Q8NES3-4"/>
    <property type="protein sequence ID" value="ENSP00000385764.1"/>
    <property type="gene ID" value="ENSG00000106003.14"/>
</dbReference>
<dbReference type="GeneID" id="3955"/>
<dbReference type="KEGG" id="hsa:3955"/>
<dbReference type="MANE-Select" id="ENST00000222725.10">
    <property type="protein sequence ID" value="ENSP00000222725.5"/>
    <property type="RefSeq nucleotide sequence ID" value="NM_001040167.2"/>
    <property type="RefSeq protein sequence ID" value="NP_001035257.1"/>
</dbReference>
<dbReference type="UCSC" id="uc003smf.4">
    <molecule id="Q8NES3-1"/>
    <property type="organism name" value="human"/>
</dbReference>
<dbReference type="AGR" id="HGNC:6560"/>
<dbReference type="CTD" id="3955"/>
<dbReference type="DisGeNET" id="3955"/>
<dbReference type="GeneCards" id="LFNG"/>
<dbReference type="GeneReviews" id="LFNG"/>
<dbReference type="HGNC" id="HGNC:6560">
    <property type="gene designation" value="LFNG"/>
</dbReference>
<dbReference type="HPA" id="ENSG00000106003">
    <property type="expression patterns" value="Tissue enhanced (pancreas, skin)"/>
</dbReference>
<dbReference type="MalaCards" id="LFNG"/>
<dbReference type="MIM" id="602576">
    <property type="type" value="gene"/>
</dbReference>
<dbReference type="MIM" id="609813">
    <property type="type" value="phenotype"/>
</dbReference>
<dbReference type="neXtProt" id="NX_Q8NES3"/>
<dbReference type="OpenTargets" id="ENSG00000106003"/>
<dbReference type="Orphanet" id="2311">
    <property type="disease" value="Autosomal recessive spondylocostal dysostosis"/>
</dbReference>
<dbReference type="PharmGKB" id="PA30336"/>
<dbReference type="VEuPathDB" id="HostDB:ENSG00000106003"/>
<dbReference type="eggNOG" id="ENOG502QV30">
    <property type="taxonomic scope" value="Eukaryota"/>
</dbReference>
<dbReference type="GeneTree" id="ENSGT00940000158717"/>
<dbReference type="HOGENOM" id="CLU_056611_1_0_1"/>
<dbReference type="InParanoid" id="Q8NES3"/>
<dbReference type="OMA" id="CPHTAVF"/>
<dbReference type="OrthoDB" id="8959630at2759"/>
<dbReference type="PAN-GO" id="Q8NES3">
    <property type="GO annotations" value="2 GO annotations based on evolutionary models"/>
</dbReference>
<dbReference type="PhylomeDB" id="Q8NES3"/>
<dbReference type="TreeFam" id="TF324207"/>
<dbReference type="BRENDA" id="2.4.1.222">
    <property type="organism ID" value="2681"/>
</dbReference>
<dbReference type="PathwayCommons" id="Q8NES3"/>
<dbReference type="Reactome" id="R-HSA-1912420">
    <property type="pathway name" value="Pre-NOTCH Processing in Golgi"/>
</dbReference>
<dbReference type="Reactome" id="R-HSA-5083630">
    <property type="pathway name" value="Defective LFNG causes SCDO3"/>
</dbReference>
<dbReference type="Reactome" id="R-HSA-9824272">
    <property type="pathway name" value="Somitogenesis"/>
</dbReference>
<dbReference type="Reactome" id="R-HSA-9831926">
    <property type="pathway name" value="Nephron development"/>
</dbReference>
<dbReference type="SignaLink" id="Q8NES3"/>
<dbReference type="SIGNOR" id="Q8NES3"/>
<dbReference type="BioGRID-ORCS" id="3955">
    <property type="hits" value="15 hits in 1159 CRISPR screens"/>
</dbReference>
<dbReference type="ChiTaRS" id="LFNG">
    <property type="organism name" value="human"/>
</dbReference>
<dbReference type="GeneWiki" id="LFNG"/>
<dbReference type="GenomeRNAi" id="3955"/>
<dbReference type="Pharos" id="Q8NES3">
    <property type="development level" value="Tbio"/>
</dbReference>
<dbReference type="PRO" id="PR:Q8NES3"/>
<dbReference type="Proteomes" id="UP000005640">
    <property type="component" value="Chromosome 7"/>
</dbReference>
<dbReference type="RNAct" id="Q8NES3">
    <property type="molecule type" value="protein"/>
</dbReference>
<dbReference type="Bgee" id="ENSG00000106003">
    <property type="expression patterns" value="Expressed in granulocyte and 95 other cell types or tissues"/>
</dbReference>
<dbReference type="ExpressionAtlas" id="Q8NES3">
    <property type="expression patterns" value="baseline and differential"/>
</dbReference>
<dbReference type="GO" id="GO:0005576">
    <property type="term" value="C:extracellular region"/>
    <property type="evidence" value="ECO:0000303"/>
    <property type="project" value="UniProtKB"/>
</dbReference>
<dbReference type="GO" id="GO:1903561">
    <property type="term" value="C:extracellular vesicle"/>
    <property type="evidence" value="ECO:0007005"/>
    <property type="project" value="UniProtKB"/>
</dbReference>
<dbReference type="GO" id="GO:0000139">
    <property type="term" value="C:Golgi membrane"/>
    <property type="evidence" value="ECO:0000304"/>
    <property type="project" value="Reactome"/>
</dbReference>
<dbReference type="GO" id="GO:0046872">
    <property type="term" value="F:metal ion binding"/>
    <property type="evidence" value="ECO:0007669"/>
    <property type="project" value="UniProtKB-KW"/>
</dbReference>
<dbReference type="GO" id="GO:0033829">
    <property type="term" value="F:O-fucosylpeptide 3-beta-N-acetylglucosaminyltransferase activity"/>
    <property type="evidence" value="ECO:0000314"/>
    <property type="project" value="FlyBase"/>
</dbReference>
<dbReference type="GO" id="GO:0009887">
    <property type="term" value="P:animal organ morphogenesis"/>
    <property type="evidence" value="ECO:0000303"/>
    <property type="project" value="UniProtKB"/>
</dbReference>
<dbReference type="GO" id="GO:0007386">
    <property type="term" value="P:compartment pattern specification"/>
    <property type="evidence" value="ECO:0007669"/>
    <property type="project" value="Ensembl"/>
</dbReference>
<dbReference type="GO" id="GO:0002315">
    <property type="term" value="P:marginal zone B cell differentiation"/>
    <property type="evidence" value="ECO:0000250"/>
    <property type="project" value="UniProtKB"/>
</dbReference>
<dbReference type="GO" id="GO:1902367">
    <property type="term" value="P:negative regulation of Notch signaling pathway involved in somitogenesis"/>
    <property type="evidence" value="ECO:0000250"/>
    <property type="project" value="UniProtKB"/>
</dbReference>
<dbReference type="GO" id="GO:0001541">
    <property type="term" value="P:ovarian follicle development"/>
    <property type="evidence" value="ECO:0007669"/>
    <property type="project" value="Ensembl"/>
</dbReference>
<dbReference type="GO" id="GO:0051446">
    <property type="term" value="P:positive regulation of meiotic cell cycle"/>
    <property type="evidence" value="ECO:0007669"/>
    <property type="project" value="Ensembl"/>
</dbReference>
<dbReference type="GO" id="GO:0045747">
    <property type="term" value="P:positive regulation of Notch signaling pathway"/>
    <property type="evidence" value="ECO:0007669"/>
    <property type="project" value="Ensembl"/>
</dbReference>
<dbReference type="GO" id="GO:0008593">
    <property type="term" value="P:regulation of Notch signaling pathway"/>
    <property type="evidence" value="ECO:0000250"/>
    <property type="project" value="CAFA"/>
</dbReference>
<dbReference type="GO" id="GO:0014807">
    <property type="term" value="P:regulation of somitogenesis"/>
    <property type="evidence" value="ECO:0000315"/>
    <property type="project" value="UniProtKB"/>
</dbReference>
<dbReference type="GO" id="GO:0001756">
    <property type="term" value="P:somitogenesis"/>
    <property type="evidence" value="ECO:0000250"/>
    <property type="project" value="UniProtKB"/>
</dbReference>
<dbReference type="GO" id="GO:0030217">
    <property type="term" value="P:T cell differentiation"/>
    <property type="evidence" value="ECO:0000250"/>
    <property type="project" value="UniProtKB"/>
</dbReference>
<dbReference type="FunFam" id="3.90.550.50:FF:000003">
    <property type="entry name" value="Beta-1,3-N-acetylglucosaminyltransferase"/>
    <property type="match status" value="1"/>
</dbReference>
<dbReference type="Gene3D" id="3.90.550.50">
    <property type="match status" value="1"/>
</dbReference>
<dbReference type="InterPro" id="IPR017374">
    <property type="entry name" value="Fringe"/>
</dbReference>
<dbReference type="InterPro" id="IPR003378">
    <property type="entry name" value="Fringe-like_glycosylTrfase"/>
</dbReference>
<dbReference type="PANTHER" id="PTHR10811">
    <property type="entry name" value="FRINGE-RELATED"/>
    <property type="match status" value="1"/>
</dbReference>
<dbReference type="Pfam" id="PF02434">
    <property type="entry name" value="Fringe"/>
    <property type="match status" value="1"/>
</dbReference>
<dbReference type="PIRSF" id="PIRSF038073">
    <property type="entry name" value="B-acetylgalactosaminyltfrase"/>
    <property type="match status" value="1"/>
</dbReference>
<sequence>MLKRCGRRLLLALAGALLACLLVLTADPPPPPLPAERGRRALRSLAGPAGAAPAPGLGAAAAAPGALVRDVHSLSEYFSLLTRARRDAGPPPGAAPRPADGHPRPLAEPLAPRDVFIAVKTTKKFHRARLDLLLETWISRHKEMTFIFTDGEDEALARHTGNVVITNCSAAHSRQALSCKMAVEYDRFIESGRKWFCHVDDDNYVNLRALLRLLASYPHTRDVYVGKPSLDRPIQAMERVSENKVRPVHFWFATGGAGFCISRGLALKMSPWASGGHFMNTAERIRLPDDCTIGYIVEALLGVPLIRSGLFHSHLENLQQVPTSELHEQVTLSYGMFENKRNAVHVKGPFSVEADPSRFRSIHCHLYPDTPWCPRTAIF</sequence>
<proteinExistence type="evidence at protein level"/>
<feature type="chain" id="PRO_0000219176" description="Beta-1,3-N-acetylglucosaminyltransferase lunatic fringe">
    <location>
        <begin position="1"/>
        <end position="379"/>
    </location>
</feature>
<feature type="topological domain" description="Cytoplasmic" evidence="3">
    <location>
        <begin position="1"/>
        <end position="8"/>
    </location>
</feature>
<feature type="transmembrane region" description="Helical; Signal-anchor for type II membrane protein" evidence="3">
    <location>
        <begin position="9"/>
        <end position="29"/>
    </location>
</feature>
<feature type="topological domain" description="Lumenal" evidence="3">
    <location>
        <begin position="30"/>
        <end position="379"/>
    </location>
</feature>
<feature type="region of interest" description="Disordered" evidence="4">
    <location>
        <begin position="86"/>
        <end position="107"/>
    </location>
</feature>
<feature type="active site" evidence="1">
    <location>
        <position position="290"/>
    </location>
</feature>
<feature type="binding site" evidence="1">
    <location>
        <position position="129"/>
    </location>
    <ligand>
        <name>substrate</name>
    </ligand>
</feature>
<feature type="binding site" evidence="1">
    <location>
        <position position="201"/>
    </location>
    <ligand>
        <name>substrate</name>
    </ligand>
</feature>
<feature type="binding site" evidence="1">
    <location>
        <position position="202"/>
    </location>
    <ligand>
        <name>Mn(2+)</name>
        <dbReference type="ChEBI" id="CHEBI:29035"/>
    </ligand>
</feature>
<feature type="binding site" evidence="1">
    <location>
        <position position="314"/>
    </location>
    <ligand>
        <name>Mn(2+)</name>
        <dbReference type="ChEBI" id="CHEBI:29035"/>
    </ligand>
</feature>
<feature type="site" description="Cleavage; by furin-like protease" evidence="3">
    <location>
        <begin position="86"/>
        <end position="87"/>
    </location>
</feature>
<feature type="glycosylation site" description="N-linked (GlcNAc...) asparagine" evidence="3">
    <location>
        <position position="167"/>
    </location>
</feature>
<feature type="disulfide bond" evidence="1">
    <location>
        <begin position="168"/>
        <end position="179"/>
    </location>
</feature>
<feature type="disulfide bond" evidence="1">
    <location>
        <begin position="197"/>
        <end position="260"/>
    </location>
</feature>
<feature type="disulfide bond" evidence="1">
    <location>
        <begin position="364"/>
        <end position="373"/>
    </location>
</feature>
<feature type="splice variant" id="VSP_001792" description="In isoform 2." evidence="10">
    <location>
        <begin position="1"/>
        <end position="129"/>
    </location>
</feature>
<feature type="splice variant" id="VSP_044850" description="In isoform 4." evidence="9">
    <original>MLKRCGRRLLLALAGALLACLLVLTADPPPPPLPAERGRRALRSLAGPAGAAPAPGLGAAAAAPGALVRDVHS</original>
    <variation>MDEQTGRLRLDTYCMSAKQIWAWSKCSGRLWDEHMKWMEGWTDRWTDGWMDGWMDEWSPTPALRSYGGGLSQQ</variation>
    <location>
        <begin position="1"/>
        <end position="73"/>
    </location>
</feature>
<feature type="splice variant" id="VSP_044851" description="In isoform 4." evidence="9">
    <location>
        <begin position="74"/>
        <end position="144"/>
    </location>
</feature>
<feature type="splice variant" id="VSP_001793" description="In isoform 2." evidence="10">
    <original>LDLLLETWISRHKEMT</original>
    <variation>MTPGRCCLAADIQVET</variation>
    <location>
        <begin position="130"/>
        <end position="145"/>
    </location>
</feature>
<feature type="splice variant" id="VSP_001794" description="In isoform 3." evidence="11 12">
    <original>FRS</original>
    <variation>WGN</variation>
    <location>
        <begin position="359"/>
        <end position="361"/>
    </location>
</feature>
<feature type="splice variant" id="VSP_001795" description="In isoform 3." evidence="11 12">
    <location>
        <begin position="362"/>
        <end position="379"/>
    </location>
</feature>
<feature type="sequence variant" id="VAR_046785" evidence="7">
    <original>G</original>
    <variation>R</variation>
    <location>
        <position position="38"/>
    </location>
</feature>
<feature type="sequence variant" id="VAR_025850" description="In SCDO3; likely pathogenic; loss-of-function variant; the mutant mouse protein is enzymatically inactive and unable to modulate Notch signaling in a cell-based assay; dbSNP:rs104894024." evidence="6">
    <original>F</original>
    <variation>L</variation>
    <location>
        <position position="188"/>
    </location>
</feature>
<feature type="sequence variant" id="VAR_088492" description="In SCDO3; likely pathogenic; loss of acetylglucosaminyltransferase activity; dbSNP:rs1211456697." evidence="8">
    <original>D</original>
    <variation>N</variation>
    <location>
        <position position="201"/>
    </location>
</feature>
<feature type="sequence variant" id="VAR_046786" description="In dbSNP:rs71647813." evidence="7">
    <original>V</original>
    <variation>M</variation>
    <location>
        <position position="346"/>
    </location>
</feature>
<feature type="sequence conflict" description="In Ref. 5; AAF07187." evidence="13" ref="5">
    <original>R</original>
    <variation>A</variation>
    <location>
        <position position="104"/>
    </location>
</feature>
<feature type="sequence conflict" description="In Ref. 3; AAC51360." evidence="13" ref="3">
    <original>R</original>
    <variation>L</variation>
    <location>
        <position position="212"/>
    </location>
</feature>
<feature type="sequence conflict" description="In Ref. 3; AAC51360." evidence="13" ref="3">
    <original>R</original>
    <variation>L</variation>
    <location>
        <position position="221"/>
    </location>
</feature>
<feature type="sequence conflict" description="In Ref. 1; BAG53248." evidence="13" ref="1">
    <original>V</original>
    <variation>M</variation>
    <location>
        <position position="297"/>
    </location>
</feature>